<dbReference type="EMBL" id="CP000227">
    <property type="protein sequence ID" value="ACM14071.1"/>
    <property type="molecule type" value="Genomic_DNA"/>
</dbReference>
<dbReference type="SMR" id="B9IVE7"/>
<dbReference type="KEGG" id="bcq:BCQ_3643"/>
<dbReference type="HOGENOM" id="CLU_064548_7_1_9"/>
<dbReference type="Proteomes" id="UP000000441">
    <property type="component" value="Chromosome"/>
</dbReference>
<dbReference type="GO" id="GO:1990904">
    <property type="term" value="C:ribonucleoprotein complex"/>
    <property type="evidence" value="ECO:0007669"/>
    <property type="project" value="UniProtKB-KW"/>
</dbReference>
<dbReference type="GO" id="GO:0005840">
    <property type="term" value="C:ribosome"/>
    <property type="evidence" value="ECO:0007669"/>
    <property type="project" value="UniProtKB-KW"/>
</dbReference>
<dbReference type="GO" id="GO:0003735">
    <property type="term" value="F:structural constituent of ribosome"/>
    <property type="evidence" value="ECO:0007669"/>
    <property type="project" value="InterPro"/>
</dbReference>
<dbReference type="GO" id="GO:0006412">
    <property type="term" value="P:translation"/>
    <property type="evidence" value="ECO:0007669"/>
    <property type="project" value="UniProtKB-UniRule"/>
</dbReference>
<dbReference type="Gene3D" id="2.30.170.40">
    <property type="entry name" value="Ribosomal protein L28/L24"/>
    <property type="match status" value="1"/>
</dbReference>
<dbReference type="HAMAP" id="MF_00373">
    <property type="entry name" value="Ribosomal_bL28"/>
    <property type="match status" value="1"/>
</dbReference>
<dbReference type="InterPro" id="IPR050096">
    <property type="entry name" value="Bacterial_rp_bL28"/>
</dbReference>
<dbReference type="InterPro" id="IPR026569">
    <property type="entry name" value="Ribosomal_bL28"/>
</dbReference>
<dbReference type="InterPro" id="IPR034704">
    <property type="entry name" value="Ribosomal_bL28/bL31-like_sf"/>
</dbReference>
<dbReference type="InterPro" id="IPR001383">
    <property type="entry name" value="Ribosomal_bL28_bact-type"/>
</dbReference>
<dbReference type="InterPro" id="IPR037147">
    <property type="entry name" value="Ribosomal_bL28_sf"/>
</dbReference>
<dbReference type="NCBIfam" id="TIGR00009">
    <property type="entry name" value="L28"/>
    <property type="match status" value="1"/>
</dbReference>
<dbReference type="PANTHER" id="PTHR39080">
    <property type="entry name" value="50S RIBOSOMAL PROTEIN L28"/>
    <property type="match status" value="1"/>
</dbReference>
<dbReference type="PANTHER" id="PTHR39080:SF1">
    <property type="entry name" value="LARGE RIBOSOMAL SUBUNIT PROTEIN BL28A"/>
    <property type="match status" value="1"/>
</dbReference>
<dbReference type="Pfam" id="PF00830">
    <property type="entry name" value="Ribosomal_L28"/>
    <property type="match status" value="1"/>
</dbReference>
<dbReference type="SUPFAM" id="SSF143800">
    <property type="entry name" value="L28p-like"/>
    <property type="match status" value="1"/>
</dbReference>
<gene>
    <name evidence="1" type="primary">rpmB</name>
    <name type="ordered locus">BCQ_3643</name>
</gene>
<evidence type="ECO:0000255" key="1">
    <source>
        <dbReference type="HAMAP-Rule" id="MF_00373"/>
    </source>
</evidence>
<evidence type="ECO:0000256" key="2">
    <source>
        <dbReference type="SAM" id="MobiDB-lite"/>
    </source>
</evidence>
<evidence type="ECO:0000305" key="3"/>
<accession>B9IVE7</accession>
<protein>
    <recommendedName>
        <fullName evidence="1">Large ribosomal subunit protein bL28</fullName>
    </recommendedName>
    <alternativeName>
        <fullName evidence="3">50S ribosomal protein L28</fullName>
    </alternativeName>
</protein>
<comment type="similarity">
    <text evidence="1">Belongs to the bacterial ribosomal protein bL28 family.</text>
</comment>
<sequence>MARVCAITGRKARSGNSRSHAMNATKRKWGANLQKVRVRIDGKVQRVYVSARALKSGKIERV</sequence>
<feature type="chain" id="PRO_1000195903" description="Large ribosomal subunit protein bL28">
    <location>
        <begin position="1"/>
        <end position="62"/>
    </location>
</feature>
<feature type="region of interest" description="Disordered" evidence="2">
    <location>
        <begin position="1"/>
        <end position="28"/>
    </location>
</feature>
<name>RL28_BACCQ</name>
<proteinExistence type="inferred from homology"/>
<organism>
    <name type="scientific">Bacillus cereus (strain Q1)</name>
    <dbReference type="NCBI Taxonomy" id="361100"/>
    <lineage>
        <taxon>Bacteria</taxon>
        <taxon>Bacillati</taxon>
        <taxon>Bacillota</taxon>
        <taxon>Bacilli</taxon>
        <taxon>Bacillales</taxon>
        <taxon>Bacillaceae</taxon>
        <taxon>Bacillus</taxon>
        <taxon>Bacillus cereus group</taxon>
    </lineage>
</organism>
<reference key="1">
    <citation type="journal article" date="2009" name="J. Bacteriol.">
        <title>Complete genome sequence of the extremophilic Bacillus cereus strain Q1 with industrial applications.</title>
        <authorList>
            <person name="Xiong Z."/>
            <person name="Jiang Y."/>
            <person name="Qi D."/>
            <person name="Lu H."/>
            <person name="Yang F."/>
            <person name="Yang J."/>
            <person name="Chen L."/>
            <person name="Sun L."/>
            <person name="Xu X."/>
            <person name="Xue Y."/>
            <person name="Zhu Y."/>
            <person name="Jin Q."/>
        </authorList>
    </citation>
    <scope>NUCLEOTIDE SEQUENCE [LARGE SCALE GENOMIC DNA]</scope>
    <source>
        <strain>Q1</strain>
    </source>
</reference>
<keyword id="KW-0687">Ribonucleoprotein</keyword>
<keyword id="KW-0689">Ribosomal protein</keyword>